<feature type="chain" id="PRO_0000115717" description="Triplex capsid protein 1">
    <location>
        <begin position="1"/>
        <end position="465"/>
    </location>
</feature>
<evidence type="ECO:0000255" key="1">
    <source>
        <dbReference type="HAMAP-Rule" id="MF_04018"/>
    </source>
</evidence>
<organismHost>
    <name type="scientific">Equus caballus</name>
    <name type="common">Horse</name>
    <dbReference type="NCBI Taxonomy" id="9796"/>
</organismHost>
<organism>
    <name type="scientific">Equine herpesvirus 1 (strain Ab4p)</name>
    <name type="common">EHV-1</name>
    <name type="synonym">Equine abortion virus</name>
    <dbReference type="NCBI Taxonomy" id="31520"/>
    <lineage>
        <taxon>Viruses</taxon>
        <taxon>Duplodnaviria</taxon>
        <taxon>Heunggongvirae</taxon>
        <taxon>Peploviricota</taxon>
        <taxon>Herviviricetes</taxon>
        <taxon>Herpesvirales</taxon>
        <taxon>Orthoherpesviridae</taxon>
        <taxon>Alphaherpesvirinae</taxon>
        <taxon>Varicellovirus</taxon>
        <taxon>Varicellovirus equidalpha1</taxon>
        <taxon>Equid alphaherpesvirus 1</taxon>
    </lineage>
</organism>
<reference key="1">
    <citation type="journal article" date="1992" name="Virology">
        <title>The DNA sequence of equine herpesvirus-1.</title>
        <authorList>
            <person name="Telford E.A.R."/>
            <person name="Watson M.S."/>
            <person name="McBride K."/>
            <person name="Davison A.J."/>
        </authorList>
    </citation>
    <scope>NUCLEOTIDE SEQUENCE [LARGE SCALE GENOMIC DNA]</scope>
</reference>
<keyword id="KW-0167">Capsid protein</keyword>
<keyword id="KW-1048">Host nucleus</keyword>
<keyword id="KW-1185">Reference proteome</keyword>
<keyword id="KW-0946">Virion</keyword>
<gene>
    <name evidence="1" type="primary">TRX1</name>
    <name type="ordered locus">22</name>
</gene>
<name>TRX1_EHV1B</name>
<accession>P28935</accession>
<accession>Q6DLI9</accession>
<sequence length="465" mass="51307">MNLGGNRFVQIGNGMSNIMYTDANGAVRWEQISPPAGFPQQQRGRGRGHVAFGLPNTLDWLPGFVQATPNSITISNMGGIQISSAGVITAAINSEQNSWMLSSFNPSLKLTRQVTLTDFCDPTAERPGLPIIRLRHHLDAIGSSPSSTPPGRNPQELDEAWAALSELSVSGRSDTTGLRPSLLSLTFLVASRSGEYSDKAAAEAVRAHVLANYRDRRTEQRLDRFGEYLQAMVRTHVFPHKHMTVFGGLISHVIQDKLASLTAVAGGVQEGARTNNSAVPRSSVYVPACAFLDVDHELKLGDASAKFVYLIFVYSQRLRREGVRVYVAVSKFDEVAFEDAVSFLFHKARTESAIRGTEGADAPEPHPNAALPLQELSSSRCEPRCPPSRLNNREFTNALYQWAPDLRGRPNRTSCMYAAYIRLGAIASDSPRTTRRSERFGSVDMPVVWLENVRWDPQDWVECSY</sequence>
<comment type="function">
    <text evidence="1">Structural component of the T=16 icosahedral capsid. The capsid is composed of pentamers and hexamers of major capsid protein/MCP, which are linked together by heterotrimers called triplexes. These triplexes are formed by a single molecule of triplex protein 1/TRX1 and two copies of triplex protein 2/TRX2. Additionally, TRX1 is required for efficient transport of TRX2 to the nucleus, which is the site of capsid assembly.</text>
</comment>
<comment type="subunit">
    <text evidence="1">Interacts with TRX2, MCP and capsid vertex component 2/CVC2.</text>
</comment>
<comment type="subcellular location">
    <subcellularLocation>
        <location evidence="1">Virion</location>
    </subcellularLocation>
    <subcellularLocation>
        <location evidence="1">Host nucleus</location>
    </subcellularLocation>
</comment>
<comment type="similarity">
    <text evidence="1">Belongs to the herpesviridae TRX1 protein family.</text>
</comment>
<dbReference type="EMBL" id="AY665713">
    <property type="protein sequence ID" value="AAT67279.1"/>
    <property type="molecule type" value="Genomic_DNA"/>
</dbReference>
<dbReference type="PIR" id="E36797">
    <property type="entry name" value="WZBEB4"/>
</dbReference>
<dbReference type="SMR" id="P28935"/>
<dbReference type="KEGG" id="vg:1487541"/>
<dbReference type="Proteomes" id="UP000001189">
    <property type="component" value="Segment"/>
</dbReference>
<dbReference type="GO" id="GO:0042025">
    <property type="term" value="C:host cell nucleus"/>
    <property type="evidence" value="ECO:0007669"/>
    <property type="project" value="UniProtKB-SubCell"/>
</dbReference>
<dbReference type="GO" id="GO:0019028">
    <property type="term" value="C:viral capsid"/>
    <property type="evidence" value="ECO:0007669"/>
    <property type="project" value="UniProtKB-KW"/>
</dbReference>
<dbReference type="GO" id="GO:0003677">
    <property type="term" value="F:DNA binding"/>
    <property type="evidence" value="ECO:0007669"/>
    <property type="project" value="InterPro"/>
</dbReference>
<dbReference type="GO" id="GO:0019069">
    <property type="term" value="P:viral capsid assembly"/>
    <property type="evidence" value="ECO:0007669"/>
    <property type="project" value="InterPro"/>
</dbReference>
<dbReference type="HAMAP" id="MF_04018">
    <property type="entry name" value="HSV_TRX1"/>
    <property type="match status" value="1"/>
</dbReference>
<dbReference type="InterPro" id="IPR004999">
    <property type="entry name" value="Herpes_1"/>
</dbReference>
<dbReference type="Pfam" id="PF03327">
    <property type="entry name" value="Herpes_VP19C"/>
    <property type="match status" value="1"/>
</dbReference>
<proteinExistence type="inferred from homology"/>
<protein>
    <recommendedName>
        <fullName evidence="1">Triplex capsid protein 1</fullName>
    </recommendedName>
</protein>